<evidence type="ECO:0000255" key="1">
    <source>
        <dbReference type="HAMAP-Rule" id="MF_03117"/>
    </source>
</evidence>
<feature type="chain" id="PRO_0000393977" description="Enolase-phosphatase E1">
    <location>
        <begin position="1"/>
        <end position="256"/>
    </location>
</feature>
<feature type="binding site" evidence="1">
    <location>
        <position position="14"/>
    </location>
    <ligand>
        <name>Mg(2+)</name>
        <dbReference type="ChEBI" id="CHEBI:18420"/>
    </ligand>
</feature>
<feature type="binding site" evidence="1">
    <location>
        <position position="16"/>
    </location>
    <ligand>
        <name>Mg(2+)</name>
        <dbReference type="ChEBI" id="CHEBI:18420"/>
    </ligand>
</feature>
<feature type="binding site" evidence="1">
    <location>
        <begin position="142"/>
        <end position="143"/>
    </location>
    <ligand>
        <name>substrate</name>
    </ligand>
</feature>
<feature type="binding site" evidence="1">
    <location>
        <position position="176"/>
    </location>
    <ligand>
        <name>substrate</name>
    </ligand>
</feature>
<feature type="binding site" evidence="1">
    <location>
        <position position="201"/>
    </location>
    <ligand>
        <name>Mg(2+)</name>
        <dbReference type="ChEBI" id="CHEBI:18420"/>
    </ligand>
</feature>
<dbReference type="EC" id="3.1.3.77" evidence="1"/>
<dbReference type="EMBL" id="CH954181">
    <property type="protein sequence ID" value="EDV47857.1"/>
    <property type="molecule type" value="Genomic_DNA"/>
</dbReference>
<dbReference type="RefSeq" id="XP_001978899.1">
    <property type="nucleotide sequence ID" value="XM_001978863.2"/>
</dbReference>
<dbReference type="SMR" id="B3P2A7"/>
<dbReference type="EnsemblMetazoa" id="FBtr0131176">
    <property type="protein sequence ID" value="FBpp0129668"/>
    <property type="gene ID" value="FBgn0103424"/>
</dbReference>
<dbReference type="EnsemblMetazoa" id="XM_001978863.3">
    <property type="protein sequence ID" value="XP_001978899.2"/>
    <property type="gene ID" value="LOC6552381"/>
</dbReference>
<dbReference type="GeneID" id="6552381"/>
<dbReference type="KEGG" id="der:6552381"/>
<dbReference type="CTD" id="40630"/>
<dbReference type="eggNOG" id="KOG2630">
    <property type="taxonomic scope" value="Eukaryota"/>
</dbReference>
<dbReference type="HOGENOM" id="CLU_023273_0_0_1"/>
<dbReference type="OMA" id="LQGMVWE"/>
<dbReference type="OrthoDB" id="272500at2759"/>
<dbReference type="PhylomeDB" id="B3P2A7"/>
<dbReference type="UniPathway" id="UPA00904">
    <property type="reaction ID" value="UER00876"/>
</dbReference>
<dbReference type="UniPathway" id="UPA00904">
    <property type="reaction ID" value="UER00877"/>
</dbReference>
<dbReference type="Proteomes" id="UP000008711">
    <property type="component" value="Unassembled WGS sequence"/>
</dbReference>
<dbReference type="GO" id="GO:0005737">
    <property type="term" value="C:cytoplasm"/>
    <property type="evidence" value="ECO:0007669"/>
    <property type="project" value="UniProtKB-SubCell"/>
</dbReference>
<dbReference type="GO" id="GO:0005634">
    <property type="term" value="C:nucleus"/>
    <property type="evidence" value="ECO:0007669"/>
    <property type="project" value="UniProtKB-SubCell"/>
</dbReference>
<dbReference type="GO" id="GO:0043874">
    <property type="term" value="F:acireductone synthase activity"/>
    <property type="evidence" value="ECO:0007669"/>
    <property type="project" value="UniProtKB-EC"/>
</dbReference>
<dbReference type="GO" id="GO:0000287">
    <property type="term" value="F:magnesium ion binding"/>
    <property type="evidence" value="ECO:0007669"/>
    <property type="project" value="UniProtKB-UniRule"/>
</dbReference>
<dbReference type="GO" id="GO:0019509">
    <property type="term" value="P:L-methionine salvage from methylthioadenosine"/>
    <property type="evidence" value="ECO:0007669"/>
    <property type="project" value="UniProtKB-UniRule"/>
</dbReference>
<dbReference type="CDD" id="cd01629">
    <property type="entry name" value="HAD_EP"/>
    <property type="match status" value="1"/>
</dbReference>
<dbReference type="FunFam" id="1.10.720.60:FF:000007">
    <property type="entry name" value="Enolase-phosphatase E1"/>
    <property type="match status" value="1"/>
</dbReference>
<dbReference type="FunFam" id="3.40.50.1000:FF:000079">
    <property type="entry name" value="Enolase-phosphatase E1"/>
    <property type="match status" value="1"/>
</dbReference>
<dbReference type="Gene3D" id="1.10.720.60">
    <property type="match status" value="1"/>
</dbReference>
<dbReference type="Gene3D" id="3.40.50.1000">
    <property type="entry name" value="HAD superfamily/HAD-like"/>
    <property type="match status" value="1"/>
</dbReference>
<dbReference type="HAMAP" id="MF_01681">
    <property type="entry name" value="Salvage_MtnC"/>
    <property type="match status" value="1"/>
</dbReference>
<dbReference type="HAMAP" id="MF_03117">
    <property type="entry name" value="Salvage_MtnC_euk"/>
    <property type="match status" value="1"/>
</dbReference>
<dbReference type="InterPro" id="IPR023943">
    <property type="entry name" value="Enolase-ppase_E1"/>
</dbReference>
<dbReference type="InterPro" id="IPR027511">
    <property type="entry name" value="ENOPH1_eukaryotes"/>
</dbReference>
<dbReference type="InterPro" id="IPR036412">
    <property type="entry name" value="HAD-like_sf"/>
</dbReference>
<dbReference type="InterPro" id="IPR006439">
    <property type="entry name" value="HAD-SF_hydro_IA"/>
</dbReference>
<dbReference type="InterPro" id="IPR023214">
    <property type="entry name" value="HAD_sf"/>
</dbReference>
<dbReference type="NCBIfam" id="TIGR01691">
    <property type="entry name" value="enolase-ppase"/>
    <property type="match status" value="1"/>
</dbReference>
<dbReference type="PANTHER" id="PTHR20371">
    <property type="entry name" value="ENOLASE-PHOSPHATASE E1"/>
    <property type="match status" value="1"/>
</dbReference>
<dbReference type="PANTHER" id="PTHR20371:SF1">
    <property type="entry name" value="ENOLASE-PHOSPHATASE E1"/>
    <property type="match status" value="1"/>
</dbReference>
<dbReference type="Pfam" id="PF00702">
    <property type="entry name" value="Hydrolase"/>
    <property type="match status" value="1"/>
</dbReference>
<dbReference type="PRINTS" id="PR00413">
    <property type="entry name" value="HADHALOGNASE"/>
</dbReference>
<dbReference type="SFLD" id="SFLDG01133">
    <property type="entry name" value="C1.5.4:_Enolase-phosphatase_Li"/>
    <property type="match status" value="1"/>
</dbReference>
<dbReference type="SFLD" id="SFLDF00044">
    <property type="entry name" value="enolase-phosphatase"/>
    <property type="match status" value="1"/>
</dbReference>
<dbReference type="SUPFAM" id="SSF56784">
    <property type="entry name" value="HAD-like"/>
    <property type="match status" value="1"/>
</dbReference>
<proteinExistence type="inferred from homology"/>
<sequence length="256" mass="28516">MTSSERMAKVVLVDIEGTTTSISFVHDILFPYAKQNVEKFLRNSWEEDDIQHIVQDLQQVPQFADYKALLSAPPAEVDFELIAGFVRYLIDQDLKVTPMKTLQGLIWAQGYTNGELKGHVYEDVPTAFKAWRAAGLQIAVYSSGSVAAQKLIFGHSLVGNLQPYLSAYFDTHVGHKQEQQSYETIAKLLKEDPKHILFLTDIPGEAAAARSAGLQAIILQRPGNAALADDQKASFELIPDFKPLQNLKLPLNKYQA</sequence>
<reference key="1">
    <citation type="journal article" date="2007" name="Nature">
        <title>Evolution of genes and genomes on the Drosophila phylogeny.</title>
        <authorList>
            <consortium name="Drosophila 12 genomes consortium"/>
        </authorList>
    </citation>
    <scope>NUCLEOTIDE SEQUENCE [LARGE SCALE GENOMIC DNA]</scope>
    <source>
        <strain>Tucson 14021-0224.01</strain>
    </source>
</reference>
<accession>B3P2A7</accession>
<gene>
    <name type="ORF">GG11122</name>
</gene>
<protein>
    <recommendedName>
        <fullName evidence="1">Enolase-phosphatase E1</fullName>
        <ecNumber evidence="1">3.1.3.77</ecNumber>
    </recommendedName>
    <alternativeName>
        <fullName evidence="1">2,3-diketo-5-methylthio-1-phosphopentane phosphatase</fullName>
    </alternativeName>
</protein>
<organism>
    <name type="scientific">Drosophila erecta</name>
    <name type="common">Fruit fly</name>
    <dbReference type="NCBI Taxonomy" id="7220"/>
    <lineage>
        <taxon>Eukaryota</taxon>
        <taxon>Metazoa</taxon>
        <taxon>Ecdysozoa</taxon>
        <taxon>Arthropoda</taxon>
        <taxon>Hexapoda</taxon>
        <taxon>Insecta</taxon>
        <taxon>Pterygota</taxon>
        <taxon>Neoptera</taxon>
        <taxon>Endopterygota</taxon>
        <taxon>Diptera</taxon>
        <taxon>Brachycera</taxon>
        <taxon>Muscomorpha</taxon>
        <taxon>Ephydroidea</taxon>
        <taxon>Drosophilidae</taxon>
        <taxon>Drosophila</taxon>
        <taxon>Sophophora</taxon>
    </lineage>
</organism>
<name>ENOPH_DROER</name>
<keyword id="KW-0028">Amino-acid biosynthesis</keyword>
<keyword id="KW-0963">Cytoplasm</keyword>
<keyword id="KW-0378">Hydrolase</keyword>
<keyword id="KW-0460">Magnesium</keyword>
<keyword id="KW-0479">Metal-binding</keyword>
<keyword id="KW-0486">Methionine biosynthesis</keyword>
<keyword id="KW-0539">Nucleus</keyword>
<comment type="function">
    <text evidence="1">Bifunctional enzyme that catalyzes the enolization of 2,3-diketo-5-methylthiopentyl-1-phosphate (DK-MTP-1-P) into the intermediate 2-hydroxy-3-keto-5-methylthiopentenyl-1-phosphate (HK-MTPenyl-1-P), which is then dephosphorylated to form the acireductone 1,2-dihydroxy-3-keto-5-methylthiopentene (DHK-MTPene).</text>
</comment>
<comment type="catalytic activity">
    <reaction evidence="1">
        <text>5-methylsulfanyl-2,3-dioxopentyl phosphate + H2O = 1,2-dihydroxy-5-(methylsulfanyl)pent-1-en-3-one + phosphate</text>
        <dbReference type="Rhea" id="RHEA:21700"/>
        <dbReference type="ChEBI" id="CHEBI:15377"/>
        <dbReference type="ChEBI" id="CHEBI:43474"/>
        <dbReference type="ChEBI" id="CHEBI:49252"/>
        <dbReference type="ChEBI" id="CHEBI:58828"/>
        <dbReference type="EC" id="3.1.3.77"/>
    </reaction>
</comment>
<comment type="cofactor">
    <cofactor evidence="1">
        <name>Mg(2+)</name>
        <dbReference type="ChEBI" id="CHEBI:18420"/>
    </cofactor>
    <text evidence="1">Binds 1 Mg(2+) ion per subunit.</text>
</comment>
<comment type="pathway">
    <text evidence="1">Amino-acid biosynthesis; L-methionine biosynthesis via salvage pathway; L-methionine from S-methyl-5-thio-alpha-D-ribose 1-phosphate: step 3/6.</text>
</comment>
<comment type="pathway">
    <text evidence="1">Amino-acid biosynthesis; L-methionine biosynthesis via salvage pathway; L-methionine from S-methyl-5-thio-alpha-D-ribose 1-phosphate: step 4/6.</text>
</comment>
<comment type="subunit">
    <text evidence="1">Monomer.</text>
</comment>
<comment type="subcellular location">
    <subcellularLocation>
        <location evidence="1">Cytoplasm</location>
    </subcellularLocation>
    <subcellularLocation>
        <location evidence="1">Nucleus</location>
    </subcellularLocation>
</comment>
<comment type="similarity">
    <text evidence="1">Belongs to the HAD-like hydrolase superfamily. MasA/MtnC family.</text>
</comment>